<sequence length="189" mass="21020">MAKVNLEQIEHAVRLILEAIGDDPNREGVLDTPKRVAKMYAEVFSGMHEDPKEHLHKVFGEDHEELVLVKDIPFYSMCEHHLVPFYGVAHVAYIPQGGKVTGLSKLARTVDTIARRPQLQERITSTVANSIMEVLEPHGVMVVVEAEHMCMTMRGVKKPGAKTVTTAVRGVLENDAAARSEILSFIKTK</sequence>
<keyword id="KW-0342">GTP-binding</keyword>
<keyword id="KW-0378">Hydrolase</keyword>
<keyword id="KW-0479">Metal-binding</keyword>
<keyword id="KW-0547">Nucleotide-binding</keyword>
<keyword id="KW-0554">One-carbon metabolism</keyword>
<keyword id="KW-1185">Reference proteome</keyword>
<keyword id="KW-0862">Zinc</keyword>
<reference key="1">
    <citation type="journal article" date="2003" name="Nature">
        <title>The genome sequence of Bacillus anthracis Ames and comparison to closely related bacteria.</title>
        <authorList>
            <person name="Read T.D."/>
            <person name="Peterson S.N."/>
            <person name="Tourasse N.J."/>
            <person name="Baillie L.W."/>
            <person name="Paulsen I.T."/>
            <person name="Nelson K.E."/>
            <person name="Tettelin H."/>
            <person name="Fouts D.E."/>
            <person name="Eisen J.A."/>
            <person name="Gill S.R."/>
            <person name="Holtzapple E.K."/>
            <person name="Okstad O.A."/>
            <person name="Helgason E."/>
            <person name="Rilstone J."/>
            <person name="Wu M."/>
            <person name="Kolonay J.F."/>
            <person name="Beanan M.J."/>
            <person name="Dodson R.J."/>
            <person name="Brinkac L.M."/>
            <person name="Gwinn M.L."/>
            <person name="DeBoy R.T."/>
            <person name="Madpu R."/>
            <person name="Daugherty S.C."/>
            <person name="Durkin A.S."/>
            <person name="Haft D.H."/>
            <person name="Nelson W.C."/>
            <person name="Peterson J.D."/>
            <person name="Pop M."/>
            <person name="Khouri H.M."/>
            <person name="Radune D."/>
            <person name="Benton J.L."/>
            <person name="Mahamoud Y."/>
            <person name="Jiang L."/>
            <person name="Hance I.R."/>
            <person name="Weidman J.F."/>
            <person name="Berry K.J."/>
            <person name="Plaut R.D."/>
            <person name="Wolf A.M."/>
            <person name="Watkins K.L."/>
            <person name="Nierman W.C."/>
            <person name="Hazen A."/>
            <person name="Cline R.T."/>
            <person name="Redmond C."/>
            <person name="Thwaite J.E."/>
            <person name="White O."/>
            <person name="Salzberg S.L."/>
            <person name="Thomason B."/>
            <person name="Friedlander A.M."/>
            <person name="Koehler T.M."/>
            <person name="Hanna P.C."/>
            <person name="Kolstoe A.-B."/>
            <person name="Fraser C.M."/>
        </authorList>
    </citation>
    <scope>NUCLEOTIDE SEQUENCE [LARGE SCALE GENOMIC DNA]</scope>
    <source>
        <strain>Ames / isolate Porton</strain>
    </source>
</reference>
<reference key="2">
    <citation type="journal article" date="2009" name="J. Bacteriol.">
        <title>The complete genome sequence of Bacillus anthracis Ames 'Ancestor'.</title>
        <authorList>
            <person name="Ravel J."/>
            <person name="Jiang L."/>
            <person name="Stanley S.T."/>
            <person name="Wilson M.R."/>
            <person name="Decker R.S."/>
            <person name="Read T.D."/>
            <person name="Worsham P."/>
            <person name="Keim P.S."/>
            <person name="Salzberg S.L."/>
            <person name="Fraser-Liggett C.M."/>
            <person name="Rasko D.A."/>
        </authorList>
    </citation>
    <scope>NUCLEOTIDE SEQUENCE [LARGE SCALE GENOMIC DNA]</scope>
    <source>
        <strain>Ames ancestor</strain>
    </source>
</reference>
<reference key="3">
    <citation type="submission" date="2004-01" db="EMBL/GenBank/DDBJ databases">
        <title>Complete genome sequence of Bacillus anthracis Sterne.</title>
        <authorList>
            <person name="Brettin T.S."/>
            <person name="Bruce D."/>
            <person name="Challacombe J.F."/>
            <person name="Gilna P."/>
            <person name="Han C."/>
            <person name="Hill K."/>
            <person name="Hitchcock P."/>
            <person name="Jackson P."/>
            <person name="Keim P."/>
            <person name="Longmire J."/>
            <person name="Lucas S."/>
            <person name="Okinaka R."/>
            <person name="Richardson P."/>
            <person name="Rubin E."/>
            <person name="Tice H."/>
        </authorList>
    </citation>
    <scope>NUCLEOTIDE SEQUENCE [LARGE SCALE GENOMIC DNA]</scope>
    <source>
        <strain>Sterne</strain>
    </source>
</reference>
<gene>
    <name evidence="2" type="primary">folE</name>
    <name type="synonym">mtrA</name>
    <name type="ordered locus">BA_1532</name>
    <name type="ordered locus">GBAA_1532</name>
    <name type="ordered locus">BAS1421</name>
</gene>
<accession>Q81SW2</accession>
<accession>Q6I141</accession>
<accession>Q6KUZ5</accession>
<name>GCH1_BACAN</name>
<feature type="chain" id="PRO_0000119382" description="GTP cyclohydrolase 1">
    <location>
        <begin position="1"/>
        <end position="189"/>
    </location>
</feature>
<feature type="binding site" evidence="2">
    <location>
        <position position="78"/>
    </location>
    <ligand>
        <name>Zn(2+)</name>
        <dbReference type="ChEBI" id="CHEBI:29105"/>
    </ligand>
</feature>
<feature type="binding site" evidence="2">
    <location>
        <position position="81"/>
    </location>
    <ligand>
        <name>Zn(2+)</name>
        <dbReference type="ChEBI" id="CHEBI:29105"/>
    </ligand>
</feature>
<feature type="binding site" evidence="2">
    <location>
        <position position="150"/>
    </location>
    <ligand>
        <name>Zn(2+)</name>
        <dbReference type="ChEBI" id="CHEBI:29105"/>
    </ligand>
</feature>
<evidence type="ECO:0000250" key="1"/>
<evidence type="ECO:0000255" key="2">
    <source>
        <dbReference type="HAMAP-Rule" id="MF_00223"/>
    </source>
</evidence>
<proteinExistence type="inferred from homology"/>
<organism>
    <name type="scientific">Bacillus anthracis</name>
    <dbReference type="NCBI Taxonomy" id="1392"/>
    <lineage>
        <taxon>Bacteria</taxon>
        <taxon>Bacillati</taxon>
        <taxon>Bacillota</taxon>
        <taxon>Bacilli</taxon>
        <taxon>Bacillales</taxon>
        <taxon>Bacillaceae</taxon>
        <taxon>Bacillus</taxon>
        <taxon>Bacillus cereus group</taxon>
    </lineage>
</organism>
<protein>
    <recommendedName>
        <fullName evidence="2">GTP cyclohydrolase 1</fullName>
        <ecNumber evidence="2">3.5.4.16</ecNumber>
    </recommendedName>
    <alternativeName>
        <fullName evidence="2">GTP cyclohydrolase I</fullName>
        <shortName evidence="2">GTP-CH-I</shortName>
    </alternativeName>
</protein>
<comment type="catalytic activity">
    <reaction evidence="2">
        <text>GTP + H2O = 7,8-dihydroneopterin 3'-triphosphate + formate + H(+)</text>
        <dbReference type="Rhea" id="RHEA:17473"/>
        <dbReference type="ChEBI" id="CHEBI:15377"/>
        <dbReference type="ChEBI" id="CHEBI:15378"/>
        <dbReference type="ChEBI" id="CHEBI:15740"/>
        <dbReference type="ChEBI" id="CHEBI:37565"/>
        <dbReference type="ChEBI" id="CHEBI:58462"/>
        <dbReference type="EC" id="3.5.4.16"/>
    </reaction>
</comment>
<comment type="pathway">
    <text evidence="2">Cofactor biosynthesis; 7,8-dihydroneopterin triphosphate biosynthesis; 7,8-dihydroneopterin triphosphate from GTP: step 1/1.</text>
</comment>
<comment type="subunit">
    <text evidence="1">Toroid-shaped homodecamer, composed of two pentamers of five dimers.</text>
</comment>
<comment type="similarity">
    <text evidence="2">Belongs to the GTP cyclohydrolase I family.</text>
</comment>
<dbReference type="EC" id="3.5.4.16" evidence="2"/>
<dbReference type="EMBL" id="AE016879">
    <property type="protein sequence ID" value="AAP25469.1"/>
    <property type="molecule type" value="Genomic_DNA"/>
</dbReference>
<dbReference type="EMBL" id="AE017334">
    <property type="protein sequence ID" value="AAT30630.1"/>
    <property type="molecule type" value="Genomic_DNA"/>
</dbReference>
<dbReference type="EMBL" id="AE017225">
    <property type="protein sequence ID" value="AAT53741.1"/>
    <property type="molecule type" value="Genomic_DNA"/>
</dbReference>
<dbReference type="RefSeq" id="NP_843983.1">
    <property type="nucleotide sequence ID" value="NC_003997.3"/>
</dbReference>
<dbReference type="RefSeq" id="WP_001151482.1">
    <property type="nucleotide sequence ID" value="NZ_WXXI01000033.1"/>
</dbReference>
<dbReference type="RefSeq" id="YP_027690.1">
    <property type="nucleotide sequence ID" value="NC_005945.1"/>
</dbReference>
<dbReference type="SMR" id="Q81SW2"/>
<dbReference type="STRING" id="261594.GBAA_1532"/>
<dbReference type="DNASU" id="1086534"/>
<dbReference type="GeneID" id="93009529"/>
<dbReference type="KEGG" id="ban:BA_1532"/>
<dbReference type="KEGG" id="bar:GBAA_1532"/>
<dbReference type="KEGG" id="bat:BAS1421"/>
<dbReference type="PATRIC" id="fig|198094.11.peg.1504"/>
<dbReference type="eggNOG" id="COG0302">
    <property type="taxonomic scope" value="Bacteria"/>
</dbReference>
<dbReference type="HOGENOM" id="CLU_049768_3_3_9"/>
<dbReference type="OMA" id="CEHMCMS"/>
<dbReference type="OrthoDB" id="9801207at2"/>
<dbReference type="UniPathway" id="UPA00848">
    <property type="reaction ID" value="UER00151"/>
</dbReference>
<dbReference type="Proteomes" id="UP000000427">
    <property type="component" value="Chromosome"/>
</dbReference>
<dbReference type="Proteomes" id="UP000000594">
    <property type="component" value="Chromosome"/>
</dbReference>
<dbReference type="GO" id="GO:0005737">
    <property type="term" value="C:cytoplasm"/>
    <property type="evidence" value="ECO:0007669"/>
    <property type="project" value="TreeGrafter"/>
</dbReference>
<dbReference type="GO" id="GO:0005525">
    <property type="term" value="F:GTP binding"/>
    <property type="evidence" value="ECO:0007669"/>
    <property type="project" value="UniProtKB-KW"/>
</dbReference>
<dbReference type="GO" id="GO:0003934">
    <property type="term" value="F:GTP cyclohydrolase I activity"/>
    <property type="evidence" value="ECO:0007669"/>
    <property type="project" value="UniProtKB-UniRule"/>
</dbReference>
<dbReference type="GO" id="GO:0008270">
    <property type="term" value="F:zinc ion binding"/>
    <property type="evidence" value="ECO:0007669"/>
    <property type="project" value="UniProtKB-UniRule"/>
</dbReference>
<dbReference type="GO" id="GO:0006730">
    <property type="term" value="P:one-carbon metabolic process"/>
    <property type="evidence" value="ECO:0007669"/>
    <property type="project" value="UniProtKB-UniRule"/>
</dbReference>
<dbReference type="GO" id="GO:0006729">
    <property type="term" value="P:tetrahydrobiopterin biosynthetic process"/>
    <property type="evidence" value="ECO:0007669"/>
    <property type="project" value="TreeGrafter"/>
</dbReference>
<dbReference type="GO" id="GO:0046654">
    <property type="term" value="P:tetrahydrofolate biosynthetic process"/>
    <property type="evidence" value="ECO:0007669"/>
    <property type="project" value="UniProtKB-UniRule"/>
</dbReference>
<dbReference type="CDD" id="cd00642">
    <property type="entry name" value="GTP_cyclohydro1"/>
    <property type="match status" value="1"/>
</dbReference>
<dbReference type="FunFam" id="1.10.286.10:FF:000001">
    <property type="entry name" value="GTP cyclohydrolase 1"/>
    <property type="match status" value="1"/>
</dbReference>
<dbReference type="FunFam" id="3.30.1130.10:FF:000001">
    <property type="entry name" value="GTP cyclohydrolase 1"/>
    <property type="match status" value="1"/>
</dbReference>
<dbReference type="Gene3D" id="1.10.286.10">
    <property type="match status" value="1"/>
</dbReference>
<dbReference type="Gene3D" id="3.30.1130.10">
    <property type="match status" value="1"/>
</dbReference>
<dbReference type="HAMAP" id="MF_00223">
    <property type="entry name" value="FolE"/>
    <property type="match status" value="1"/>
</dbReference>
<dbReference type="InterPro" id="IPR043133">
    <property type="entry name" value="GTP-CH-I_C/QueF"/>
</dbReference>
<dbReference type="InterPro" id="IPR043134">
    <property type="entry name" value="GTP-CH-I_N"/>
</dbReference>
<dbReference type="InterPro" id="IPR001474">
    <property type="entry name" value="GTP_CycHdrlase_I"/>
</dbReference>
<dbReference type="InterPro" id="IPR018234">
    <property type="entry name" value="GTP_CycHdrlase_I_CS"/>
</dbReference>
<dbReference type="InterPro" id="IPR020602">
    <property type="entry name" value="GTP_CycHdrlase_I_dom"/>
</dbReference>
<dbReference type="NCBIfam" id="TIGR00063">
    <property type="entry name" value="folE"/>
    <property type="match status" value="1"/>
</dbReference>
<dbReference type="NCBIfam" id="NF006825">
    <property type="entry name" value="PRK09347.1-2"/>
    <property type="match status" value="1"/>
</dbReference>
<dbReference type="NCBIfam" id="NF006826">
    <property type="entry name" value="PRK09347.1-3"/>
    <property type="match status" value="1"/>
</dbReference>
<dbReference type="PANTHER" id="PTHR11109:SF7">
    <property type="entry name" value="GTP CYCLOHYDROLASE 1"/>
    <property type="match status" value="1"/>
</dbReference>
<dbReference type="PANTHER" id="PTHR11109">
    <property type="entry name" value="GTP CYCLOHYDROLASE I"/>
    <property type="match status" value="1"/>
</dbReference>
<dbReference type="Pfam" id="PF01227">
    <property type="entry name" value="GTP_cyclohydroI"/>
    <property type="match status" value="1"/>
</dbReference>
<dbReference type="SUPFAM" id="SSF55620">
    <property type="entry name" value="Tetrahydrobiopterin biosynthesis enzymes-like"/>
    <property type="match status" value="1"/>
</dbReference>
<dbReference type="PROSITE" id="PS00859">
    <property type="entry name" value="GTP_CYCLOHYDROL_1_1"/>
    <property type="match status" value="1"/>
</dbReference>
<dbReference type="PROSITE" id="PS00860">
    <property type="entry name" value="GTP_CYCLOHYDROL_1_2"/>
    <property type="match status" value="1"/>
</dbReference>